<accession>C9RGE3</accession>
<feature type="chain" id="PRO_0000406923" description="2-amino-5-formylamino-6-ribosylaminopyrimidin-4(3H)-one 5'-monophosphate deformylase">
    <location>
        <begin position="1"/>
        <end position="226"/>
    </location>
</feature>
<feature type="binding site" evidence="2">
    <location>
        <position position="29"/>
    </location>
    <ligand>
        <name>Fe cation</name>
        <dbReference type="ChEBI" id="CHEBI:24875"/>
        <label>1</label>
    </ligand>
</feature>
<feature type="binding site" evidence="2">
    <location>
        <position position="31"/>
    </location>
    <ligand>
        <name>Fe cation</name>
        <dbReference type="ChEBI" id="CHEBI:24875"/>
        <label>2</label>
    </ligand>
</feature>
<feature type="binding site" evidence="2">
    <location>
        <position position="40"/>
    </location>
    <ligand>
        <name>Fe cation</name>
        <dbReference type="ChEBI" id="CHEBI:24875"/>
        <label>1</label>
    </ligand>
</feature>
<feature type="binding site" evidence="2">
    <location>
        <position position="40"/>
    </location>
    <ligand>
        <name>Fe cation</name>
        <dbReference type="ChEBI" id="CHEBI:24875"/>
        <label>2</label>
    </ligand>
</feature>
<feature type="binding site" evidence="2">
    <location>
        <position position="108"/>
    </location>
    <ligand>
        <name>Fe cation</name>
        <dbReference type="ChEBI" id="CHEBI:24875"/>
        <label>1</label>
    </ligand>
</feature>
<reference key="1">
    <citation type="submission" date="2009-10" db="EMBL/GenBank/DDBJ databases">
        <title>Complete sequence of chromosome of Methanocaldococcus vulcanius M7.</title>
        <authorList>
            <consortium name="US DOE Joint Genome Institute"/>
            <person name="Lucas S."/>
            <person name="Copeland A."/>
            <person name="Lapidus A."/>
            <person name="Glavina del Rio T."/>
            <person name="Dalin E."/>
            <person name="Tice H."/>
            <person name="Bruce D."/>
            <person name="Goodwin L."/>
            <person name="Pitluck S."/>
            <person name="Lcollab F.I."/>
            <person name="Brettin T."/>
            <person name="Detter J.C."/>
            <person name="Han C."/>
            <person name="Tapia R."/>
            <person name="Kuske C.R."/>
            <person name="Schmutz J."/>
            <person name="Larimer F."/>
            <person name="Land M."/>
            <person name="Hauser L."/>
            <person name="Kyrpides N."/>
            <person name="Ovchinikova G."/>
            <person name="Sieprawska-Lupa M."/>
            <person name="Whitman W.B."/>
            <person name="Woyke T."/>
        </authorList>
    </citation>
    <scope>NUCLEOTIDE SEQUENCE [LARGE SCALE GENOMIC DNA]</scope>
    <source>
        <strain>ATCC 700851 / DSM 12094 / M7</strain>
    </source>
</reference>
<protein>
    <recommendedName>
        <fullName evidence="2">2-amino-5-formylamino-6-ribosylaminopyrimidin-4(3H)-one 5'-monophosphate deformylase</fullName>
        <shortName evidence="2">FAPy deformylase</shortName>
        <ecNumber evidence="2">3.5.1.102</ecNumber>
    </recommendedName>
    <alternativeName>
        <fullName evidence="2">Formamide hydrolase</fullName>
    </alternativeName>
</protein>
<comment type="function">
    <text evidence="2">Catalyzes the hydrolysis of the formamide of 2-amino-5-formylamino-6-ribosylamino-4(3H)-pyrimidinone 5'-monophosphate (FAPy) to form 2,5-diamino-6-ribosylamino-4(3H)-pyrimidinone 5'-phosphate (APy).</text>
</comment>
<comment type="catalytic activity">
    <reaction evidence="2">
        <text>2-amino-5-formylamino-6-(5-phospho-D-ribosylamino)pyrimidin-4(3H)-one + H2O = 2,5-diamino-6-(1-D-ribosylamino)pyrimidin-4(3H)-one 5'-phosphate + formate + H(+)</text>
        <dbReference type="Rhea" id="RHEA:27282"/>
        <dbReference type="ChEBI" id="CHEBI:15377"/>
        <dbReference type="ChEBI" id="CHEBI:15378"/>
        <dbReference type="ChEBI" id="CHEBI:15740"/>
        <dbReference type="ChEBI" id="CHEBI:57258"/>
        <dbReference type="ChEBI" id="CHEBI:59545"/>
        <dbReference type="EC" id="3.5.1.102"/>
    </reaction>
</comment>
<comment type="cofactor">
    <cofactor evidence="1">
        <name>Fe(2+)</name>
        <dbReference type="ChEBI" id="CHEBI:29033"/>
    </cofactor>
    <text evidence="1">Requires one Fe(2+) ion for activity.</text>
</comment>
<comment type="cofactor">
    <cofactor evidence="1">
        <name>Fe(2+)</name>
        <dbReference type="ChEBI" id="CHEBI:29033"/>
    </cofactor>
    <cofactor evidence="1">
        <name>Zn(2+)</name>
        <dbReference type="ChEBI" id="CHEBI:29105"/>
    </cofactor>
    <text evidence="1">Requires an additional second metal ion that could be Fe(2+) or Zn(2+).</text>
</comment>
<comment type="pathway">
    <text evidence="2">Cofactor biosynthesis; coenzyme F420 biosynthesis.</text>
</comment>
<comment type="pathway">
    <text evidence="2">Cofactor biosynthesis; riboflavin biosynthesis.</text>
</comment>
<comment type="subunit">
    <text evidence="2">Homodimer.</text>
</comment>
<comment type="similarity">
    <text evidence="2">Belongs to the creatininase superfamily. FAPy deformylase family.</text>
</comment>
<organism>
    <name type="scientific">Methanocaldococcus vulcanius (strain ATCC 700851 / DSM 12094 / M7)</name>
    <name type="common">Methanococcus vulcanius</name>
    <dbReference type="NCBI Taxonomy" id="579137"/>
    <lineage>
        <taxon>Archaea</taxon>
        <taxon>Methanobacteriati</taxon>
        <taxon>Methanobacteriota</taxon>
        <taxon>Methanomada group</taxon>
        <taxon>Methanococci</taxon>
        <taxon>Methanococcales</taxon>
        <taxon>Methanocaldococcaceae</taxon>
        <taxon>Methanocaldococcus</taxon>
    </lineage>
</organism>
<keyword id="KW-0378">Hydrolase</keyword>
<keyword id="KW-0408">Iron</keyword>
<keyword id="KW-0479">Metal-binding</keyword>
<keyword id="KW-0862">Zinc</keyword>
<evidence type="ECO:0000250" key="1"/>
<evidence type="ECO:0000255" key="2">
    <source>
        <dbReference type="HAMAP-Rule" id="MF_02116"/>
    </source>
</evidence>
<gene>
    <name evidence="2" type="primary">arfB</name>
    <name type="ordered locus">Metvu_0787</name>
</gene>
<name>ARFB_METVM</name>
<proteinExistence type="inferred from homology"/>
<dbReference type="EC" id="3.5.1.102" evidence="2"/>
<dbReference type="EMBL" id="CP001787">
    <property type="protein sequence ID" value="ACX72645.1"/>
    <property type="molecule type" value="Genomic_DNA"/>
</dbReference>
<dbReference type="RefSeq" id="WP_015732865.1">
    <property type="nucleotide sequence ID" value="NC_013407.1"/>
</dbReference>
<dbReference type="SMR" id="C9RGE3"/>
<dbReference type="STRING" id="579137.Metvu_0787"/>
<dbReference type="GeneID" id="8513124"/>
<dbReference type="KEGG" id="mvu:Metvu_0787"/>
<dbReference type="eggNOG" id="arCOG04536">
    <property type="taxonomic scope" value="Archaea"/>
</dbReference>
<dbReference type="HOGENOM" id="CLU_1192640_0_0_2"/>
<dbReference type="OrthoDB" id="46121at2157"/>
<dbReference type="UniPathway" id="UPA00071"/>
<dbReference type="UniPathway" id="UPA00275"/>
<dbReference type="Proteomes" id="UP000002063">
    <property type="component" value="Chromosome"/>
</dbReference>
<dbReference type="GO" id="GO:0043729">
    <property type="term" value="F:2-amino-5-formylamino-6-(5-phosphoribosylamino)pyrimidin-4(3H)-one formate-lyase activity"/>
    <property type="evidence" value="ECO:0007669"/>
    <property type="project" value="UniProtKB-EC"/>
</dbReference>
<dbReference type="GO" id="GO:0008198">
    <property type="term" value="F:ferrous iron binding"/>
    <property type="evidence" value="ECO:0007669"/>
    <property type="project" value="UniProtKB-UniRule"/>
</dbReference>
<dbReference type="GO" id="GO:0052645">
    <property type="term" value="P:F420-0 metabolic process"/>
    <property type="evidence" value="ECO:0007669"/>
    <property type="project" value="UniProtKB-UniRule"/>
</dbReference>
<dbReference type="GO" id="GO:0009231">
    <property type="term" value="P:riboflavin biosynthetic process"/>
    <property type="evidence" value="ECO:0007669"/>
    <property type="project" value="UniProtKB-UniRule"/>
</dbReference>
<dbReference type="Gene3D" id="3.40.50.10310">
    <property type="entry name" value="Creatininase"/>
    <property type="match status" value="1"/>
</dbReference>
<dbReference type="HAMAP" id="MF_02116">
    <property type="entry name" value="FAPy_deform"/>
    <property type="match status" value="1"/>
</dbReference>
<dbReference type="InterPro" id="IPR024087">
    <property type="entry name" value="Creatininase-like_sf"/>
</dbReference>
<dbReference type="InterPro" id="IPR003785">
    <property type="entry name" value="Creatininase/forma_Hydrolase"/>
</dbReference>
<dbReference type="InterPro" id="IPR024901">
    <property type="entry name" value="FAPy_deformylase"/>
</dbReference>
<dbReference type="NCBIfam" id="NF033501">
    <property type="entry name" value="ArfB_arch_rifla"/>
    <property type="match status" value="1"/>
</dbReference>
<dbReference type="PANTHER" id="PTHR35005:SF1">
    <property type="entry name" value="2-AMINO-5-FORMYLAMINO-6-RIBOSYLAMINOPYRIMIDIN-4(3H)-ONE 5'-MONOPHOSPHATE DEFORMYLASE"/>
    <property type="match status" value="1"/>
</dbReference>
<dbReference type="PANTHER" id="PTHR35005">
    <property type="entry name" value="3-DEHYDRO-SCYLLO-INOSOSE HYDROLASE"/>
    <property type="match status" value="1"/>
</dbReference>
<dbReference type="Pfam" id="PF02633">
    <property type="entry name" value="Creatininase"/>
    <property type="match status" value="1"/>
</dbReference>
<dbReference type="SUPFAM" id="SSF102215">
    <property type="entry name" value="Creatininase"/>
    <property type="match status" value="1"/>
</dbReference>
<sequence length="226" mass="25261">MVEIRLSSGKILNKKVHKIGVIALGSFLENHGAVLPIDTDIKIASYIALNASILTGAKFLGVVIPSTEYEYVKHGIHNKVDEILDYLRFMINWGKKIGVEEIIIVNCHGGNVLIEEHLKNLEKELDVSIEMINITFTHASTEEVSVGEVIGISDVKRLEEHTNFEKYPEVGMVGLKEARRNNPIIDQEAKEVETSGVKVDRELGRSILKNAIEKVVKKIEEKIAKK</sequence>